<sequence>MRVFKDIVGYSHDELCSDAYPMTEINNGLIYEVQAKMVTIDLDVKVNTGANAASEETEEDEGVDNAGSKQVINVVDAMRLVETSFDKKSYTGYIKAYMKEVLAKLADNNPSRVDAFKKDAADFVKSVLGKFDEYKFYTGENMDADGHVALMYYKPGEVDPIFLYFKDGLESVKY</sequence>
<feature type="chain" id="PRO_0000328127" description="Translationally-controlled tumor protein homolog 1">
    <location>
        <begin position="1"/>
        <end position="174"/>
    </location>
</feature>
<feature type="domain" description="TCTP" evidence="2">
    <location>
        <begin position="1"/>
        <end position="174"/>
    </location>
</feature>
<dbReference type="EMBL" id="AAFI02000047">
    <property type="protein sequence ID" value="EAL66006.1"/>
    <property type="molecule type" value="Genomic_DNA"/>
</dbReference>
<dbReference type="RefSeq" id="XP_639361.1">
    <property type="nucleotide sequence ID" value="XM_634269.1"/>
</dbReference>
<dbReference type="SMR" id="Q54RX6"/>
<dbReference type="FunCoup" id="Q54RX6">
    <property type="interactions" value="955"/>
</dbReference>
<dbReference type="STRING" id="44689.Q54RX6"/>
<dbReference type="PaxDb" id="44689-DDB0305046"/>
<dbReference type="EnsemblProtists" id="EAL66006">
    <property type="protein sequence ID" value="EAL66006"/>
    <property type="gene ID" value="DDB_G0282853"/>
</dbReference>
<dbReference type="GeneID" id="8623801"/>
<dbReference type="KEGG" id="ddi:DDB_G0282853"/>
<dbReference type="dictyBase" id="DDB_G0282853">
    <property type="gene designation" value="tpt1"/>
</dbReference>
<dbReference type="VEuPathDB" id="AmoebaDB:DDB_G0282853"/>
<dbReference type="eggNOG" id="KOG1727">
    <property type="taxonomic scope" value="Eukaryota"/>
</dbReference>
<dbReference type="HOGENOM" id="CLU_095877_1_0_1"/>
<dbReference type="InParanoid" id="Q54RX6"/>
<dbReference type="OMA" id="CAMITEG"/>
<dbReference type="PhylomeDB" id="Q54RX6"/>
<dbReference type="PRO" id="PR:Q54RX6"/>
<dbReference type="Proteomes" id="UP000002195">
    <property type="component" value="Chromosome 3"/>
</dbReference>
<dbReference type="GO" id="GO:0005737">
    <property type="term" value="C:cytoplasm"/>
    <property type="evidence" value="ECO:0000318"/>
    <property type="project" value="GO_Central"/>
</dbReference>
<dbReference type="GO" id="GO:0005634">
    <property type="term" value="C:nucleus"/>
    <property type="evidence" value="ECO:0000304"/>
    <property type="project" value="dictyBase"/>
</dbReference>
<dbReference type="GO" id="GO:0005509">
    <property type="term" value="F:calcium ion binding"/>
    <property type="evidence" value="ECO:0000318"/>
    <property type="project" value="GO_Central"/>
</dbReference>
<dbReference type="GO" id="GO:0019954">
    <property type="term" value="P:asexual reproduction"/>
    <property type="evidence" value="ECO:0000315"/>
    <property type="project" value="dictyBase"/>
</dbReference>
<dbReference type="GO" id="GO:0030154">
    <property type="term" value="P:cell differentiation"/>
    <property type="evidence" value="ECO:0000315"/>
    <property type="project" value="dictyBase"/>
</dbReference>
<dbReference type="GO" id="GO:0044351">
    <property type="term" value="P:macropinocytosis"/>
    <property type="evidence" value="ECO:0000315"/>
    <property type="project" value="dictyBase"/>
</dbReference>
<dbReference type="GO" id="GO:0010507">
    <property type="term" value="P:negative regulation of autophagy"/>
    <property type="evidence" value="ECO:0000315"/>
    <property type="project" value="dictyBase"/>
</dbReference>
<dbReference type="GO" id="GO:0030587">
    <property type="term" value="P:sorocarp development"/>
    <property type="evidence" value="ECO:0000315"/>
    <property type="project" value="dictyBase"/>
</dbReference>
<dbReference type="FunFam" id="2.170.150.10:FF:000002">
    <property type="entry name" value="Translationally-controlled tumor protein homolog"/>
    <property type="match status" value="1"/>
</dbReference>
<dbReference type="Gene3D" id="2.170.150.10">
    <property type="entry name" value="Metal Binding Protein, Guanine Nucleotide Exchange Factor, Chain A"/>
    <property type="match status" value="1"/>
</dbReference>
<dbReference type="InterPro" id="IPR011057">
    <property type="entry name" value="Mss4-like_sf"/>
</dbReference>
<dbReference type="InterPro" id="IPR011323">
    <property type="entry name" value="Mss4/transl-control_tumour"/>
</dbReference>
<dbReference type="InterPro" id="IPR034737">
    <property type="entry name" value="TCTP"/>
</dbReference>
<dbReference type="InterPro" id="IPR018103">
    <property type="entry name" value="Translation_control_tumour_CS"/>
</dbReference>
<dbReference type="InterPro" id="IPR018105">
    <property type="entry name" value="Translational_control_tumour_p"/>
</dbReference>
<dbReference type="PANTHER" id="PTHR11991">
    <property type="entry name" value="TRANSLATIONALLY CONTROLLED TUMOR PROTEIN-RELATED"/>
    <property type="match status" value="1"/>
</dbReference>
<dbReference type="PANTHER" id="PTHR11991:SF0">
    <property type="entry name" value="TRANSLATIONALLY-CONTROLLED TUMOR PROTEIN"/>
    <property type="match status" value="1"/>
</dbReference>
<dbReference type="Pfam" id="PF00838">
    <property type="entry name" value="TCTP"/>
    <property type="match status" value="1"/>
</dbReference>
<dbReference type="SUPFAM" id="SSF51316">
    <property type="entry name" value="Mss4-like"/>
    <property type="match status" value="1"/>
</dbReference>
<dbReference type="PROSITE" id="PS01003">
    <property type="entry name" value="TCTP_2"/>
    <property type="match status" value="1"/>
</dbReference>
<dbReference type="PROSITE" id="PS51797">
    <property type="entry name" value="TCTP_3"/>
    <property type="match status" value="1"/>
</dbReference>
<evidence type="ECO:0000250" key="1"/>
<evidence type="ECO:0000255" key="2">
    <source>
        <dbReference type="PROSITE-ProRule" id="PRU01133"/>
    </source>
</evidence>
<gene>
    <name type="ORF">DDB_G0282853</name>
</gene>
<protein>
    <recommendedName>
        <fullName>Translationally-controlled tumor protein homolog 1</fullName>
        <shortName>TCTP 1</shortName>
    </recommendedName>
</protein>
<organism>
    <name type="scientific">Dictyostelium discoideum</name>
    <name type="common">Social amoeba</name>
    <dbReference type="NCBI Taxonomy" id="44689"/>
    <lineage>
        <taxon>Eukaryota</taxon>
        <taxon>Amoebozoa</taxon>
        <taxon>Evosea</taxon>
        <taxon>Eumycetozoa</taxon>
        <taxon>Dictyostelia</taxon>
        <taxon>Dictyosteliales</taxon>
        <taxon>Dictyosteliaceae</taxon>
        <taxon>Dictyostelium</taxon>
    </lineage>
</organism>
<name>TCTP1_DICDI</name>
<keyword id="KW-0106">Calcium</keyword>
<keyword id="KW-0963">Cytoplasm</keyword>
<keyword id="KW-1185">Reference proteome</keyword>
<accession>Q54RX6</accession>
<comment type="function">
    <text evidence="1">Involved in calcium binding and microtubule stabilization.</text>
</comment>
<comment type="subcellular location">
    <subcellularLocation>
        <location evidence="1">Cytoplasm</location>
    </subcellularLocation>
</comment>
<comment type="similarity">
    <text evidence="2">Belongs to the TCTP family.</text>
</comment>
<reference key="1">
    <citation type="journal article" date="2005" name="Nature">
        <title>The genome of the social amoeba Dictyostelium discoideum.</title>
        <authorList>
            <person name="Eichinger L."/>
            <person name="Pachebat J.A."/>
            <person name="Gloeckner G."/>
            <person name="Rajandream M.A."/>
            <person name="Sucgang R."/>
            <person name="Berriman M."/>
            <person name="Song J."/>
            <person name="Olsen R."/>
            <person name="Szafranski K."/>
            <person name="Xu Q."/>
            <person name="Tunggal B."/>
            <person name="Kummerfeld S."/>
            <person name="Madera M."/>
            <person name="Konfortov B.A."/>
            <person name="Rivero F."/>
            <person name="Bankier A.T."/>
            <person name="Lehmann R."/>
            <person name="Hamlin N."/>
            <person name="Davies R."/>
            <person name="Gaudet P."/>
            <person name="Fey P."/>
            <person name="Pilcher K."/>
            <person name="Chen G."/>
            <person name="Saunders D."/>
            <person name="Sodergren E.J."/>
            <person name="Davis P."/>
            <person name="Kerhornou A."/>
            <person name="Nie X."/>
            <person name="Hall N."/>
            <person name="Anjard C."/>
            <person name="Hemphill L."/>
            <person name="Bason N."/>
            <person name="Farbrother P."/>
            <person name="Desany B."/>
            <person name="Just E."/>
            <person name="Morio T."/>
            <person name="Rost R."/>
            <person name="Churcher C.M."/>
            <person name="Cooper J."/>
            <person name="Haydock S."/>
            <person name="van Driessche N."/>
            <person name="Cronin A."/>
            <person name="Goodhead I."/>
            <person name="Muzny D.M."/>
            <person name="Mourier T."/>
            <person name="Pain A."/>
            <person name="Lu M."/>
            <person name="Harper D."/>
            <person name="Lindsay R."/>
            <person name="Hauser H."/>
            <person name="James K.D."/>
            <person name="Quiles M."/>
            <person name="Madan Babu M."/>
            <person name="Saito T."/>
            <person name="Buchrieser C."/>
            <person name="Wardroper A."/>
            <person name="Felder M."/>
            <person name="Thangavelu M."/>
            <person name="Johnson D."/>
            <person name="Knights A."/>
            <person name="Loulseged H."/>
            <person name="Mungall K.L."/>
            <person name="Oliver K."/>
            <person name="Price C."/>
            <person name="Quail M.A."/>
            <person name="Urushihara H."/>
            <person name="Hernandez J."/>
            <person name="Rabbinowitsch E."/>
            <person name="Steffen D."/>
            <person name="Sanders M."/>
            <person name="Ma J."/>
            <person name="Kohara Y."/>
            <person name="Sharp S."/>
            <person name="Simmonds M.N."/>
            <person name="Spiegler S."/>
            <person name="Tivey A."/>
            <person name="Sugano S."/>
            <person name="White B."/>
            <person name="Walker D."/>
            <person name="Woodward J.R."/>
            <person name="Winckler T."/>
            <person name="Tanaka Y."/>
            <person name="Shaulsky G."/>
            <person name="Schleicher M."/>
            <person name="Weinstock G.M."/>
            <person name="Rosenthal A."/>
            <person name="Cox E.C."/>
            <person name="Chisholm R.L."/>
            <person name="Gibbs R.A."/>
            <person name="Loomis W.F."/>
            <person name="Platzer M."/>
            <person name="Kay R.R."/>
            <person name="Williams J.G."/>
            <person name="Dear P.H."/>
            <person name="Noegel A.A."/>
            <person name="Barrell B.G."/>
            <person name="Kuspa A."/>
        </authorList>
    </citation>
    <scope>NUCLEOTIDE SEQUENCE [LARGE SCALE GENOMIC DNA]</scope>
    <source>
        <strain>AX4</strain>
    </source>
</reference>
<proteinExistence type="inferred from homology"/>